<reference key="1">
    <citation type="journal article" date="2001" name="Nature">
        <title>Genome sequence of enterohaemorrhagic Escherichia coli O157:H7.</title>
        <authorList>
            <person name="Perna N.T."/>
            <person name="Plunkett G. III"/>
            <person name="Burland V."/>
            <person name="Mau B."/>
            <person name="Glasner J.D."/>
            <person name="Rose D.J."/>
            <person name="Mayhew G.F."/>
            <person name="Evans P.S."/>
            <person name="Gregor J."/>
            <person name="Kirkpatrick H.A."/>
            <person name="Posfai G."/>
            <person name="Hackett J."/>
            <person name="Klink S."/>
            <person name="Boutin A."/>
            <person name="Shao Y."/>
            <person name="Miller L."/>
            <person name="Grotbeck E.J."/>
            <person name="Davis N.W."/>
            <person name="Lim A."/>
            <person name="Dimalanta E.T."/>
            <person name="Potamousis K."/>
            <person name="Apodaca J."/>
            <person name="Anantharaman T.S."/>
            <person name="Lin J."/>
            <person name="Yen G."/>
            <person name="Schwartz D.C."/>
            <person name="Welch R.A."/>
            <person name="Blattner F.R."/>
        </authorList>
    </citation>
    <scope>NUCLEOTIDE SEQUENCE [LARGE SCALE GENOMIC DNA]</scope>
    <source>
        <strain>O157:H7 / EDL933 / ATCC 700927 / EHEC</strain>
    </source>
</reference>
<reference key="2">
    <citation type="journal article" date="2001" name="DNA Res.">
        <title>Complete genome sequence of enterohemorrhagic Escherichia coli O157:H7 and genomic comparison with a laboratory strain K-12.</title>
        <authorList>
            <person name="Hayashi T."/>
            <person name="Makino K."/>
            <person name="Ohnishi M."/>
            <person name="Kurokawa K."/>
            <person name="Ishii K."/>
            <person name="Yokoyama K."/>
            <person name="Han C.-G."/>
            <person name="Ohtsubo E."/>
            <person name="Nakayama K."/>
            <person name="Murata T."/>
            <person name="Tanaka M."/>
            <person name="Tobe T."/>
            <person name="Iida T."/>
            <person name="Takami H."/>
            <person name="Honda T."/>
            <person name="Sasakawa C."/>
            <person name="Ogasawara N."/>
            <person name="Yasunaga T."/>
            <person name="Kuhara S."/>
            <person name="Shiba T."/>
            <person name="Hattori M."/>
            <person name="Shinagawa H."/>
        </authorList>
    </citation>
    <scope>NUCLEOTIDE SEQUENCE [LARGE SCALE GENOMIC DNA]</scope>
    <source>
        <strain>O157:H7 / Sakai / RIMD 0509952 / EHEC</strain>
    </source>
</reference>
<organism>
    <name type="scientific">Escherichia coli O157:H7</name>
    <dbReference type="NCBI Taxonomy" id="83334"/>
    <lineage>
        <taxon>Bacteria</taxon>
        <taxon>Pseudomonadati</taxon>
        <taxon>Pseudomonadota</taxon>
        <taxon>Gammaproteobacteria</taxon>
        <taxon>Enterobacterales</taxon>
        <taxon>Enterobacteriaceae</taxon>
        <taxon>Escherichia</taxon>
    </lineage>
</organism>
<evidence type="ECO:0000255" key="1">
    <source>
        <dbReference type="PROSITE-ProRule" id="PRU00303"/>
    </source>
</evidence>
<evidence type="ECO:0000305" key="2"/>
<gene>
    <name type="primary">ygdR</name>
    <name type="ordered locus">Z4151</name>
    <name type="ordered locus">ECs3690</name>
</gene>
<protein>
    <recommendedName>
        <fullName>Uncharacterized lipoprotein YgdR</fullName>
    </recommendedName>
</protein>
<keyword id="KW-1003">Cell membrane</keyword>
<keyword id="KW-0449">Lipoprotein</keyword>
<keyword id="KW-0472">Membrane</keyword>
<keyword id="KW-0564">Palmitate</keyword>
<keyword id="KW-1185">Reference proteome</keyword>
<keyword id="KW-0732">Signal</keyword>
<name>YGDR_ECO57</name>
<dbReference type="EMBL" id="AE005174">
    <property type="protein sequence ID" value="AAG57945.1"/>
    <property type="molecule type" value="Genomic_DNA"/>
</dbReference>
<dbReference type="EMBL" id="BA000007">
    <property type="protein sequence ID" value="BAB37113.1"/>
    <property type="molecule type" value="Genomic_DNA"/>
</dbReference>
<dbReference type="PIR" id="B91090">
    <property type="entry name" value="B91090"/>
</dbReference>
<dbReference type="PIR" id="E85935">
    <property type="entry name" value="E85935"/>
</dbReference>
<dbReference type="RefSeq" id="NP_311717.1">
    <property type="nucleotide sequence ID" value="NC_002695.1"/>
</dbReference>
<dbReference type="RefSeq" id="WP_000758655.1">
    <property type="nucleotide sequence ID" value="NZ_VOAI01000003.1"/>
</dbReference>
<dbReference type="BMRB" id="P65296"/>
<dbReference type="SMR" id="P65296"/>
<dbReference type="STRING" id="155864.Z4151"/>
<dbReference type="GeneID" id="916497"/>
<dbReference type="GeneID" id="93779165"/>
<dbReference type="KEGG" id="ece:Z4151"/>
<dbReference type="KEGG" id="ecs:ECs_3690"/>
<dbReference type="PATRIC" id="fig|386585.9.peg.3857"/>
<dbReference type="eggNOG" id="ENOG50333U0">
    <property type="taxonomic scope" value="Bacteria"/>
</dbReference>
<dbReference type="HOGENOM" id="CLU_182841_0_1_6"/>
<dbReference type="OMA" id="DGTMIMT"/>
<dbReference type="Proteomes" id="UP000000558">
    <property type="component" value="Chromosome"/>
</dbReference>
<dbReference type="Proteomes" id="UP000002519">
    <property type="component" value="Chromosome"/>
</dbReference>
<dbReference type="GO" id="GO:0005886">
    <property type="term" value="C:plasma membrane"/>
    <property type="evidence" value="ECO:0007669"/>
    <property type="project" value="UniProtKB-SubCell"/>
</dbReference>
<dbReference type="Gene3D" id="2.30.30.100">
    <property type="match status" value="1"/>
</dbReference>
<dbReference type="InterPro" id="IPR010920">
    <property type="entry name" value="LSM_dom_sf"/>
</dbReference>
<dbReference type="InterPro" id="IPR010305">
    <property type="entry name" value="YgdI/YgdR-like"/>
</dbReference>
<dbReference type="InterPro" id="IPR047807">
    <property type="entry name" value="YgdI/YgdR-like_SH3-like"/>
</dbReference>
<dbReference type="NCBIfam" id="NF033216">
    <property type="entry name" value="lipo_YgdI_YgdR"/>
    <property type="match status" value="1"/>
</dbReference>
<dbReference type="PANTHER" id="PTHR37011:SF1">
    <property type="entry name" value="POT FAMILY PEPTIDE TRANSPORT PROTEIN"/>
    <property type="match status" value="1"/>
</dbReference>
<dbReference type="PANTHER" id="PTHR37011">
    <property type="entry name" value="POT FAMILY PEPTIDE TRANSPORT PROTEIN-RELATED"/>
    <property type="match status" value="1"/>
</dbReference>
<dbReference type="Pfam" id="PF06004">
    <property type="entry name" value="DUF903"/>
    <property type="match status" value="1"/>
</dbReference>
<dbReference type="SUPFAM" id="SSF50182">
    <property type="entry name" value="Sm-like ribonucleoproteins"/>
    <property type="match status" value="1"/>
</dbReference>
<dbReference type="PROSITE" id="PS51257">
    <property type="entry name" value="PROKAR_LIPOPROTEIN"/>
    <property type="match status" value="1"/>
</dbReference>
<feature type="signal peptide" evidence="1">
    <location>
        <begin position="1"/>
        <end position="19"/>
    </location>
</feature>
<feature type="chain" id="PRO_0000018052" description="Uncharacterized lipoprotein YgdR">
    <location>
        <begin position="20"/>
        <end position="72"/>
    </location>
</feature>
<feature type="lipid moiety-binding region" description="N-palmitoyl cysteine" evidence="1">
    <location>
        <position position="20"/>
    </location>
</feature>
<feature type="lipid moiety-binding region" description="S-diacylglycerol cysteine" evidence="1">
    <location>
        <position position="20"/>
    </location>
</feature>
<accession>P65296</accession>
<accession>Q46932</accession>
<proteinExistence type="inferred from homology"/>
<sequence>MKKWAVIISAVGLAFAVSGCSSDYVMATKDGRMILTDGKPEIDDDTGLVSYHDQQGNAMQINRDDVSQIIER</sequence>
<comment type="subcellular location">
    <subcellularLocation>
        <location evidence="1">Cell membrane</location>
        <topology evidence="1">Lipid-anchor</topology>
    </subcellularLocation>
</comment>
<comment type="similarity">
    <text evidence="2">To E.coli YgdI.</text>
</comment>